<gene>
    <name type="primary">TICAM1</name>
    <name type="synonym">PRVTIRB</name>
    <name type="synonym">TRIF</name>
</gene>
<comment type="function">
    <text evidence="1 4 5 8 24 31">Involved in innate immunity against invading pathogens. Adapter used by TLR3, TLR4 (through TICAM2) and TLR5 to mediate NF-kappa-B and interferon-regulatory factor (IRF) activation, and to induce apoptosis (PubMed:12471095, PubMed:12539043, PubMed:14739303, PubMed:28747347, PubMed:35215908). Ligand binding to these receptors results in TRIF recruitment through its TIR domain (PubMed:12471095, PubMed:12539043, PubMed:14739303). Distinct protein-interaction motifs allow recruitment of the effector proteins TBK1, TRAF6 and RIPK1, which in turn, lead to the activation of transcription factors IRF3 and IRF7, NF-kappa-B and FADD respectively (PubMed:12471095, PubMed:12539043, PubMed:14739303). Phosphorylation by TBK1 on the pLxIS motif leads to recruitment and subsequent activation of the transcription factor IRF3 to induce expression of type I interferon and exert a potent immunity against invading pathogens (PubMed:25636800). Component of a multi-helicase-TICAM1 complex that acts as a cytoplasmic sensor of viral double-stranded RNA (dsRNA) and plays a role in the activation of a cascade of antiviral responses including the induction of pro-inflammatory cytokines (By similarity).</text>
</comment>
<comment type="subunit">
    <text evidence="1 4 5 6 8 9 10 11 14 15 17 20 24 25 26 29 31 32">Homodimer (PubMed:12539043). Found in a multi-helicase-TICAM1 complex at least composed of DHX36, DDX1, DDX21 and TICAM1; this complex exists in resting cells with or without poly(I:C) RNA ligand stimulation. Interacts (via TIR domain) with DDX21 (via C-terminus). Interacts (via TIR domain) with DHX36 (via C-terminus) (By similarity). Interacts with AZI2 and IRF7 (PubMed:12471095, PubMed:15611223). Interacts with TICAM2 in TLR4 recruitment (PubMed:12721283, PubMed:25736436). Interaction with PIAS4 inhibits the TICAM1-induced NF-kappa-B, IRF and IFNB1 activation (PubMed:15251447). Interacts with IKBKB and IKBKE. Interaction with SARM1 blocks TICAM1-dependent transcription factor activation (PubMed:16964262). Interacts with TRAF3 (By similarity). Interacts (when phosphorylated) with IRF3; following activation and phosphorylation on the pLxIS motif by TBK1, recruits IRF3 (PubMed:12471095, PubMed:14739303, PubMed:25636800, PubMed:27302953). Interacts with TBK1, TRAF6 and RIPK1 and these interactions are enhanced in the presence of WDFY1 (PubMed:14982987, PubMed:25736436). Interacts with TRAFD1 (By similarity). Interacts with UBQLN1 (via UBA domain) (PubMed:21695056). Interacts with TLR4 (PubMed:36232715). Interacts with WDFY1 in response to poly(I:C) (By similarity). Interacts (via the TIR domain) with TLR3 in response to poly(I:C) and this interaction is enhanced in the presence of WDFY1 (PubMed:25736436). Interacts with TRIM56 (PubMed:22948160). Component of a multi-helicase-TICAM1 complex that acts as a cytoplasmic sensor of viral double-stranded RNA (dsRNA) and plays a role in the activation of a cascade of antiviral responses including the induction of pro-inflammatory cytokines (By similarity). Interacts (via the TIR domain) with TLR5 (PubMed:20855887). Interacts with TRIM8 (PubMed:28747347). Interacts with TAX1BP1 and TRIM32; these interactions target TICAM1 to TAX1BP1-mediated selective autophagic degradation (PubMed:28898289). Interacts with DDX50 (PubMed:35215908).</text>
</comment>
<comment type="subunit">
    <text evidence="12">(Microbial infection) Interacts with hepatitis C virus (HCV) NS3/4A protease; this interaction leads to TICAM1 cleavage, thereby disrupting TLR3 signaling and preventing the establishment of an antiviral state.</text>
</comment>
<comment type="subunit">
    <text evidence="27">(Microbial infection) Interacts with Seneca Valley virus protease 3C; this interaction allows the cleavage of TICAM1/TRIF and subsequent suppression of host innate immunity.</text>
</comment>
<comment type="subunit">
    <text evidence="16">(Microbial infection) Interacts (via C-terminus) with coxsackievirus B3 (CVB3) protease 3C.</text>
</comment>
<comment type="interaction">
    <interactant intactId="EBI-525995">
        <id>Q8IUC6</id>
    </interactant>
    <interactant intactId="EBI-2339854">
        <id>Q86X55</id>
        <label>CARM1</label>
    </interactant>
    <organismsDiffer>false</organismsDiffer>
    <experiments>2</experiments>
</comment>
<comment type="interaction">
    <interactant intactId="EBI-525995">
        <id>Q8IUC6</id>
    </interactant>
    <interactant intactId="EBI-356402">
        <id>Q9UHD2</id>
        <label>TBK1</label>
    </interactant>
    <organismsDiffer>false</organismsDiffer>
    <experiments>3</experiments>
</comment>
<comment type="interaction">
    <interactant intactId="EBI-525995">
        <id>Q8IUC6</id>
    </interactant>
    <interactant intactId="EBI-1048636">
        <id>Q9BRZ2</id>
        <label>TRIM56</label>
    </interactant>
    <organismsDiffer>false</organismsDiffer>
    <experiments>2</experiments>
</comment>
<comment type="subcellular location">
    <subcellularLocation>
        <location evidence="17">Cytoplasmic vesicle</location>
        <location evidence="17">Autophagosome</location>
    </subcellularLocation>
    <subcellularLocation>
        <location evidence="1">Cytoplasm</location>
        <location evidence="1">Cytosol</location>
    </subcellularLocation>
    <subcellularLocation>
        <location evidence="1">Mitochondrion</location>
    </subcellularLocation>
    <text evidence="1 17">Colocalizes with UBQLN1 in the autophagosome (PubMed:21695056). Colocalizes in the cytosol with DDX1, DDX21 and DHX36. Colocalizes in the mitochondria with DDX1 and poly(I:C) RNA ligand. The multi-helicase-TICAM1 complex may translocate to the mitochondria upon poly(I:C) RNA ligand stimulation (By similarity).</text>
</comment>
<comment type="tissue specificity">
    <text evidence="4 5">Ubiquitously expressed but with higher levels in liver.</text>
</comment>
<comment type="domain">
    <text evidence="24">The pLxIS motif constitutes an IRF3-binding motif: following phosphorylation by TBK1, the phosphorylated pLxIS motif of TICAM1 recruits IRF3 (PubMed:25636800). IRF3 is then phosphorylated and activated by TBK1 to induce type-I interferons and other cytokines (PubMed:25636800).</text>
</comment>
<comment type="domain">
    <text evidence="4 5 8">The N-terminal region is essential for activation of the IFNB promoter activity.</text>
</comment>
<comment type="domain">
    <text evidence="22">The N-terminal domain (TRIF-NTD) is globular and consists of two alpha-helical subdomains connected by a 14-residue linker. It shares structural similarity with IFIT family members N-terminal regions.</text>
</comment>
<comment type="PTM">
    <text evidence="7 24 26">Phosphorylated by TBK1 (PubMed:14530355, PubMed:25636800). Following activation, phosphorylated by TBK1 at Ser-210 in the pLxIS motif (PubMed:25636800). The phosphorylated pLxIS motif constitutes an IRF3-binding motif, leading to recruitment of the transcription factor IRF3 to induce type-I interferons and other cytokines (PubMed:25636800, PubMed:27302953).</text>
</comment>
<comment type="PTM">
    <text evidence="21 28">Polyubiquitinated at Lys-229 by TRIM38 with 'Lys-48'-linked chains, leading to proteasomal degradation (PubMed:23056470). Polyubiquitinated with 'Lys-6'- and 'Lys-33'-linked chains in a TRIM8-dependent manner; ubiquitination disrupts the interaction with TBK1 and subsequent interferon production (PubMed:28747347).</text>
</comment>
<comment type="PTM">
    <text evidence="18">(Microbial infection) Cleaved and degraded by hepatitis A virus (HAV) protein 3CD allowing the virus to disrupt host TLR3 signaling.</text>
</comment>
<comment type="PTM">
    <text evidence="16">(Microbial infection) Cleaved by CVB3 protease 3C allowing the virus to disrupt host TLR3 signaling.</text>
</comment>
<comment type="PTM">
    <text evidence="27">(Microbial infection) Cleaved by Seneca Valley virus protease 3C allowing the virus to disrupt host TLR3 signaling.</text>
</comment>
<comment type="PTM">
    <text evidence="23">(Microbial infection) Cleaved by protease 3C of human enterovirus D68 (EV68) allowing the virus to disrupt host TLR3 signaling.</text>
</comment>
<comment type="PTM">
    <text evidence="12">(Microbial infection) Cleaved by HCV protease NS3/4A, thereby disrupting TLR3 signaling and preventing the establishment of an antiviral state.</text>
</comment>
<comment type="disease" evidence="19">
    <disease id="DI-03544">
        <name>Encephalopathy, acute, infection-induced, 6, herpes-specific</name>
        <acronym>IIAE6</acronym>
        <description>A rare complication of human herpesvirus 1 (HHV-1) infection, occurring in only a small minority of HHV-1 infected individuals. It is characterized by hemorrhagic necrosis of parts of the temporal and frontal lobes. Onset is over several days and involves fever, headache, seizures, stupor, and often coma, frequently with a fatal outcome.</description>
        <dbReference type="MIM" id="614850"/>
    </disease>
    <text>Disease susceptibility is associated with variants affecting the gene represented in this entry.</text>
</comment>
<comment type="sequence caution" evidence="33">
    <conflict type="frameshift">
        <sequence resource="EMBL-CDS" id="AAO85488"/>
    </conflict>
</comment>
<name>TCAM1_HUMAN</name>
<sequence length="712" mass="76422">MACTGPSLPSAFDILGAAGQDKLLYLKHKLKTPRPGCQGQDLLHAMVLLKLGQETEARISLEALKADAVARLVARQWAGVDSTEDPEEPPDVSWAVARLYHLLAEEKLCPASLRDVAYQEAVRTLSSRDDHRLGELQDEARNRCGWDIAGDPGSIRTLQSNLGCLPPSSALPSGTRSLPRPIDGVSDWSQGCSLRSTGSPASLASNLEISQSPTMPFLSLHRSPHGPSKLCDDPQASLVPEPVPGGCQEPEEMSWPPSGEIASPPELPSSPPPGLPEVAPDATSTGLPDTPAAPETSTNYPVECTEGSAGPQSLPLPILEPVKNPCSVKDQTPLQLSVEDTTSPNTKPCPPTPTTPETSPPPPPPPPSSTPCSAHLTPSSLFPSSLESSSEQKFYNFVILHARADEHIALRVREKLEALGVPDGATFCEDFQVPGRGELSCLQDAIDHSAFIILLLTSNFDCRLSLHQVNQAMMSNLTRQGSPDCVIPFLPLESSPAQLSSDTASLLSGLVRLDEHSQIFARKVANTFKPHRLQARKAMWRKEQDTRALREQSQHLDGERMQAAALNAAYSAYLQSYLSYQAQMEQLQVAFGSHMSFGTGAPYGARMPFGGQVPLGAPPPFPTWPGCPQPPPLHAWQAGTPPPPSPQPAAFPQSLPFPQSPAFPTASPAPPQSPGLQPLIIHHAQMVQLGLNNHMWNQRGSQAPEDKTQEAE</sequence>
<feature type="chain" id="PRO_0000317663" description="TIR domain-containing adapter molecule 1">
    <location>
        <begin position="1"/>
        <end position="712"/>
    </location>
</feature>
<feature type="domain" description="TIR" evidence="2">
    <location>
        <begin position="393"/>
        <end position="553"/>
    </location>
</feature>
<feature type="region of interest" description="TRIF-NTD" evidence="22">
    <location>
        <begin position="1"/>
        <end position="153"/>
    </location>
</feature>
<feature type="region of interest" description="Disordered" evidence="3">
    <location>
        <begin position="216"/>
        <end position="316"/>
    </location>
</feature>
<feature type="region of interest" description="Disordered" evidence="3">
    <location>
        <begin position="336"/>
        <end position="384"/>
    </location>
</feature>
<feature type="region of interest" description="Sufficient to induce apoptosis">
    <location>
        <begin position="512"/>
        <end position="712"/>
    </location>
</feature>
<feature type="region of interest" description="Disordered" evidence="3">
    <location>
        <begin position="620"/>
        <end position="677"/>
    </location>
</feature>
<feature type="short sequence motif" description="TRAF6-binding">
    <location>
        <begin position="84"/>
        <end position="91"/>
    </location>
</feature>
<feature type="short sequence motif" description="pLxIS motif" evidence="24">
    <location>
        <begin position="207"/>
        <end position="210"/>
    </location>
</feature>
<feature type="short sequence motif" description="TRAF6-binding">
    <location>
        <begin position="248"/>
        <end position="255"/>
    </location>
</feature>
<feature type="short sequence motif" description="TRAF6-binding">
    <location>
        <begin position="299"/>
        <end position="309"/>
    </location>
</feature>
<feature type="compositionally biased region" description="Pro residues" evidence="3">
    <location>
        <begin position="265"/>
        <end position="275"/>
    </location>
</feature>
<feature type="compositionally biased region" description="Pro residues" evidence="3">
    <location>
        <begin position="347"/>
        <end position="369"/>
    </location>
</feature>
<feature type="compositionally biased region" description="Pro residues" evidence="3">
    <location>
        <begin position="620"/>
        <end position="633"/>
    </location>
</feature>
<feature type="compositionally biased region" description="Pro residues" evidence="3">
    <location>
        <begin position="640"/>
        <end position="649"/>
    </location>
</feature>
<feature type="compositionally biased region" description="Low complexity" evidence="3">
    <location>
        <begin position="650"/>
        <end position="666"/>
    </location>
</feature>
<feature type="site" description="(Microbial infection) Cleavage by CV3B" evidence="16">
    <location>
        <position position="148"/>
    </location>
</feature>
<feature type="site" description="(Microbial infection) Cleavage; by viral Seneca Valley virus protease 3C" evidence="27">
    <location>
        <begin position="159"/>
        <end position="160"/>
    </location>
</feature>
<feature type="site" description="(Microbial infection) Cleavage; by viral HAV 3CD" evidence="18">
    <location>
        <position position="190"/>
    </location>
</feature>
<feature type="site" description="(Microbial infection) Cleavage; by viral EV68 protease C" evidence="23">
    <location>
        <begin position="312"/>
        <end position="313"/>
    </location>
</feature>
<feature type="site" description="(Microbial infection) Cleavage; by viral HCV NS3/4A" evidence="12">
    <location>
        <begin position="372"/>
        <end position="373"/>
    </location>
</feature>
<feature type="site" description="(Microbial infection) Cleavage; by viral HAV 3CD" evidence="18">
    <location>
        <position position="554"/>
    </location>
</feature>
<feature type="site" description="(Microbial infection) Cleavage; by viral EV68 protease C" evidence="23">
    <location>
        <begin position="653"/>
        <end position="654"/>
    </location>
</feature>
<feature type="modified residue" description="Phosphoserine; by TBK1" evidence="24 26">
    <location>
        <position position="210"/>
    </location>
</feature>
<feature type="cross-link" description="Glycyl lysine isopeptide (Lys-Gly) (interchain with G-Cter in ubiquitin)" evidence="1">
    <location>
        <position position="229"/>
    </location>
</feature>
<feature type="sequence variant" id="VAR_084053" description="Inhibition of IFNB induction; dbSNP:rs114566317." evidence="30">
    <original>T</original>
    <variation>I</variation>
    <location>
        <position position="4"/>
    </location>
</feature>
<feature type="sequence variant" id="VAR_038789" description="In a breast cancer sample; somatic mutation; dbSNP:rs2093591262." evidence="13">
    <original>M</original>
    <variation>I</variation>
    <location>
        <position position="46"/>
    </location>
</feature>
<feature type="sequence variant" id="VAR_084054" description="Inhibition of IFNB induction; dbSNP:rs201782115." evidence="30">
    <original>S</original>
    <variation>C</variation>
    <location>
        <position position="60"/>
    </location>
</feature>
<feature type="sequence variant" id="VAR_084055" description="No effect on IFNB induction; dbSNP:rs372818181." evidence="30">
    <original>R</original>
    <variation>Q</variation>
    <location>
        <position position="71"/>
    </location>
</feature>
<feature type="sequence variant" id="VAR_051416" description="In dbSNP:rs11466719.">
    <original>R</original>
    <variation>C</variation>
    <location>
        <position position="75"/>
    </location>
</feature>
<feature type="sequence variant" id="VAR_084056" description="No effect on IFNB induction; dbSNP:rs199816697." evidence="30">
    <original>V</original>
    <variation>M</variation>
    <location>
        <position position="80"/>
    </location>
</feature>
<feature type="sequence variant" id="VAR_084057" description="No effect on IFNB induction; dbSNP:rs201291933." evidence="30">
    <original>A</original>
    <variation>T</variation>
    <location>
        <position position="111"/>
    </location>
</feature>
<feature type="sequence variant" id="VAR_084058" description="Inhibition of IFNB induction." evidence="30">
    <location>
        <position position="141"/>
    </location>
</feature>
<feature type="sequence variant" id="VAR_084059" description="No effect on IFNB induction; dbSNP:rs770166865." evidence="30">
    <original>T</original>
    <variation>M</variation>
    <location>
        <position position="157"/>
    </location>
</feature>
<feature type="sequence variant" id="VAR_069082" description="In IIAE6; no effect on IFNB induction; dbSNP:rs146550489." evidence="19 30">
    <original>S</original>
    <variation>L</variation>
    <location>
        <position position="186"/>
    </location>
</feature>
<feature type="sequence variant" id="VAR_051417" description="In dbSNP:rs11466721.">
    <original>L</original>
    <variation>V</variation>
    <location>
        <position position="275"/>
    </location>
</feature>
<feature type="sequence variant" id="VAR_084060" description="No effect on IFNB induction; dbSNP:rs2093588717." evidence="30">
    <original>V</original>
    <variation>L</variation>
    <location>
        <position position="302"/>
    </location>
</feature>
<feature type="sequence variant" id="VAR_084061" description="No effect on IFNB induction; dbSNP:rs147816959." evidence="30">
    <original>T</original>
    <variation>I</variation>
    <location>
        <position position="377"/>
    </location>
</feature>
<feature type="sequence variant" id="VAR_084062" description="No effect on IFNB induction." evidence="30">
    <original>L</original>
    <variation>P</variation>
    <location>
        <position position="386"/>
    </location>
</feature>
<feature type="sequence variant" id="VAR_084063" description="Inhibition of IFNB induction." evidence="30">
    <original>Q</original>
    <variation>K</variation>
    <location>
        <position position="392"/>
    </location>
</feature>
<feature type="sequence variant" id="VAR_084064" description="No effect on IFNB induction." evidence="30">
    <original>S</original>
    <variation>N</variation>
    <location>
        <position position="465"/>
    </location>
</feature>
<feature type="sequence variant" id="VAR_084065" description="No effect on IFNB induction; dbSNP:rs143066432." evidence="30">
    <original>D</original>
    <variation>N</variation>
    <location>
        <position position="557"/>
    </location>
</feature>
<feature type="sequence variant" id="VAR_084066" description="No effect on IFNB induction; dbSNP:rs561021962." evidence="30">
    <original>M</original>
    <variation>L</variation>
    <location>
        <position position="595"/>
    </location>
</feature>
<feature type="sequence variant" id="VAR_084067" description="No effect on IFNB induction; dbSNP:rs150224968." evidence="30">
    <original>G</original>
    <variation>W</variation>
    <location>
        <position position="598"/>
    </location>
</feature>
<feature type="sequence variant" id="VAR_051418" description="In dbSNP:rs11466724.">
    <original>A</original>
    <variation>T</variation>
    <location>
        <position position="666"/>
    </location>
</feature>
<feature type="sequence variant" id="VAR_084068" description="No effect on IFNB induction." evidence="30">
    <original>Q</original>
    <variation>R</variation>
    <location>
        <position position="702"/>
    </location>
</feature>
<feature type="mutagenesis site" description="Reduces binding to TRAF6 and activation of NFKB signaling pathway; when associated with A-252 and A-303." evidence="7">
    <original>E</original>
    <variation>A</variation>
    <location>
        <position position="88"/>
    </location>
</feature>
<feature type="mutagenesis site" description="Complete loss of cleavage by Seneca Valley virus protease 3C." evidence="27">
    <original>Q</original>
    <variation>A</variation>
    <location>
        <position position="159"/>
    </location>
</feature>
<feature type="mutagenesis site" description="No effect on cleavage by Seneca Valley virus protease 3C." evidence="27">
    <original>Q</original>
    <variation>A</variation>
    <location>
        <position position="190"/>
    </location>
</feature>
<feature type="mutagenesis site" description="No cleavage by HAV 3CD." evidence="18">
    <original>Q</original>
    <variation>R</variation>
    <location>
        <position position="190"/>
    </location>
</feature>
<feature type="mutagenesis site" description="Decreased interaction with IRF3." evidence="26">
    <original>S</original>
    <variation>A</variation>
    <location>
        <position position="202"/>
    </location>
</feature>
<feature type="mutagenesis site" description="Abolished ability to activate IRF3." evidence="24">
    <original>SQSPT</original>
    <variation>AQAPA</variation>
    <location>
        <begin position="210"/>
        <end position="214"/>
    </location>
</feature>
<feature type="mutagenesis site" description="Abolished interaction with IRF3." evidence="26">
    <original>S</original>
    <variation>A</variation>
    <location>
        <position position="210"/>
    </location>
</feature>
<feature type="mutagenesis site" description="Loss of TCAM1-induced NF-kappa-B activation. Reduces interaction with TRAF6 and activation of NF-kappa-B signaling pathway; when associated with A-88 and A-303." evidence="7 9">
    <original>E</original>
    <variation>A</variation>
    <location>
        <position position="252"/>
    </location>
</feature>
<feature type="mutagenesis site" description="Resistant to caspase cleavage, no effect on TRIM38-mediated degradation; when associated with E-289." evidence="21">
    <original>D</original>
    <variation>E</variation>
    <location>
        <position position="281"/>
    </location>
</feature>
<feature type="mutagenesis site" description="Resistant to caspase cleavage, no effect on TRIM38-mediated degradation; when associated with E-281." evidence="21">
    <original>D</original>
    <variation>E</variation>
    <location>
        <position position="289"/>
    </location>
</feature>
<feature type="mutagenesis site" description="Reduces binding to TRAF6 and activation of NFKB signaling pathway; when associated with A-88 and A-252." evidence="7">
    <original>E</original>
    <variation>A</variation>
    <location>
        <position position="303"/>
    </location>
</feature>
<feature type="mutagenesis site" description="Complete loss of cleavage by HCV NS3/4A protease." evidence="12">
    <original>C</original>
    <variation>R</variation>
    <location>
        <position position="372"/>
    </location>
</feature>
<feature type="mutagenesis site" description="Abolishes interaction with TLR3." evidence="5">
    <original>P</original>
    <variation>H</variation>
    <location>
        <position position="434"/>
    </location>
</feature>
<feature type="mutagenesis site" description="Loss of TCAM1-induced NF-kappa-B and IRF3 activation." evidence="9">
    <original>E</original>
    <variation>A</variation>
    <location>
        <position position="493"/>
    </location>
</feature>
<feature type="mutagenesis site" description="No cleavage by HAV 3CD." evidence="18">
    <original>Q</original>
    <variation>R</variation>
    <location>
        <position position="554"/>
    </location>
</feature>
<feature type="mutagenesis site" description="Complete loss of cleavage by CV3B; when associated with A-659; A-671 and A-702." evidence="16">
    <original>Q</original>
    <variation>A</variation>
    <location>
        <position position="653"/>
    </location>
</feature>
<feature type="mutagenesis site" description="Complete loss of cleavage by CV3B; when associated with A-653; A-671 and A-702." evidence="16">
    <original>Q</original>
    <variation>A</variation>
    <location>
        <position position="659"/>
    </location>
</feature>
<feature type="mutagenesis site" description="Complete loss of cleavage by CV3B; when associated with A-653; A-659 and A-702." evidence="16">
    <original>Q</original>
    <variation>A</variation>
    <location>
        <position position="672"/>
    </location>
</feature>
<feature type="mutagenesis site" description="Complete loss of cleavage by CV3B; when associated with A-653; A-659 and A-671." evidence="16">
    <original>Q</original>
    <variation>A</variation>
    <location>
        <position position="702"/>
    </location>
</feature>
<feature type="sequence conflict" description="In Ref. 6; AAO85488." evidence="33" ref="6">
    <original>D</original>
    <variation>T</variation>
    <location>
        <position position="147"/>
    </location>
</feature>
<feature type="sequence conflict" description="In Ref. 6; AAO85488." evidence="33" ref="6">
    <original>G</original>
    <variation>W</variation>
    <location>
        <position position="150"/>
    </location>
</feature>
<feature type="sequence conflict" description="In Ref. 6; AAO85488." evidence="33" ref="6">
    <original>L</original>
    <variation>S</variation>
    <location>
        <position position="162"/>
    </location>
</feature>
<feature type="sequence conflict" description="In Ref. 6; AAO85488." evidence="33" ref="6">
    <location>
        <begin position="633"/>
        <end position="659"/>
    </location>
</feature>
<feature type="sequence conflict" description="In Ref. 6; AAO85488." evidence="33" ref="6">
    <original>S</original>
    <variation>P</variation>
    <location>
        <position position="660"/>
    </location>
</feature>
<feature type="helix" evidence="37">
    <location>
        <begin position="8"/>
        <end position="16"/>
    </location>
</feature>
<feature type="helix" evidence="37">
    <location>
        <begin position="20"/>
        <end position="30"/>
    </location>
</feature>
<feature type="helix" evidence="37">
    <location>
        <begin position="40"/>
        <end position="50"/>
    </location>
</feature>
<feature type="helix" evidence="37">
    <location>
        <begin position="54"/>
        <end position="62"/>
    </location>
</feature>
<feature type="turn" evidence="37">
    <location>
        <begin position="63"/>
        <end position="66"/>
    </location>
</feature>
<feature type="helix" evidence="37">
    <location>
        <begin position="68"/>
        <end position="76"/>
    </location>
</feature>
<feature type="strand" evidence="37">
    <location>
        <begin position="83"/>
        <end position="85"/>
    </location>
</feature>
<feature type="helix" evidence="37">
    <location>
        <begin position="93"/>
        <end position="105"/>
    </location>
</feature>
<feature type="helix" evidence="37">
    <location>
        <begin position="111"/>
        <end position="127"/>
    </location>
</feature>
<feature type="helix" evidence="37">
    <location>
        <begin position="133"/>
        <end position="144"/>
    </location>
</feature>
<feature type="helix" evidence="38">
    <location>
        <begin position="200"/>
        <end position="206"/>
    </location>
</feature>
<feature type="strand" evidence="36">
    <location>
        <begin position="369"/>
        <end position="371"/>
    </location>
</feature>
<feature type="helix" evidence="35">
    <location>
        <begin position="406"/>
        <end position="417"/>
    </location>
</feature>
<feature type="strand" evidence="35">
    <location>
        <begin position="431"/>
        <end position="433"/>
    </location>
</feature>
<feature type="helix" evidence="35">
    <location>
        <begin position="444"/>
        <end position="447"/>
    </location>
</feature>
<feature type="strand" evidence="35">
    <location>
        <begin position="448"/>
        <end position="455"/>
    </location>
</feature>
<feature type="helix" evidence="35">
    <location>
        <begin position="462"/>
        <end position="475"/>
    </location>
</feature>
<feature type="turn" evidence="35">
    <location>
        <begin position="477"/>
        <end position="480"/>
    </location>
</feature>
<feature type="strand" evidence="35">
    <location>
        <begin position="486"/>
        <end position="490"/>
    </location>
</feature>
<feature type="strand" evidence="35">
    <location>
        <begin position="492"/>
        <end position="494"/>
    </location>
</feature>
<feature type="helix" evidence="35">
    <location>
        <begin position="503"/>
        <end position="506"/>
    </location>
</feature>
<feature type="strand" evidence="35">
    <location>
        <begin position="508"/>
        <end position="510"/>
    </location>
</feature>
<feature type="strand" evidence="35">
    <location>
        <begin position="513"/>
        <end position="516"/>
    </location>
</feature>
<feature type="helix" evidence="35">
    <location>
        <begin position="520"/>
        <end position="527"/>
    </location>
</feature>
<feature type="helix" evidence="35">
    <location>
        <begin position="530"/>
        <end position="535"/>
    </location>
</feature>
<feature type="turn" evidence="35">
    <location>
        <begin position="536"/>
        <end position="540"/>
    </location>
</feature>
<feature type="helix" evidence="35">
    <location>
        <begin position="541"/>
        <end position="543"/>
    </location>
</feature>
<keyword id="KW-0002">3D-structure</keyword>
<keyword id="KW-0051">Antiviral defense</keyword>
<keyword id="KW-0053">Apoptosis</keyword>
<keyword id="KW-0963">Cytoplasm</keyword>
<keyword id="KW-0968">Cytoplasmic vesicle</keyword>
<keyword id="KW-0225">Disease variant</keyword>
<keyword id="KW-0945">Host-virus interaction</keyword>
<keyword id="KW-0391">Immunity</keyword>
<keyword id="KW-0395">Inflammatory response</keyword>
<keyword id="KW-0399">Innate immunity</keyword>
<keyword id="KW-1017">Isopeptide bond</keyword>
<keyword id="KW-0496">Mitochondrion</keyword>
<keyword id="KW-0597">Phosphoprotein</keyword>
<keyword id="KW-1267">Proteomics identification</keyword>
<keyword id="KW-1185">Reference proteome</keyword>
<keyword id="KW-0832">Ubl conjugation</keyword>
<accession>Q8IUC6</accession>
<accession>B3Y691</accession>
<accession>O75532</accession>
<accession>Q86XP8</accession>
<accession>Q96GA0</accession>
<reference key="1">
    <citation type="journal article" date="2002" name="J. Immunol.">
        <title>A novel Toll/IL-1 receptor domain-containing adapter that preferentially activates the IFN-beta promoter in the Toll-like receptor signaling.</title>
        <authorList>
            <person name="Yamamoto M."/>
            <person name="Sato S."/>
            <person name="Mori K."/>
            <person name="Hoshino K."/>
            <person name="Takeuchi O."/>
            <person name="Takeda K."/>
            <person name="Akira S."/>
        </authorList>
    </citation>
    <scope>NUCLEOTIDE SEQUENCE [MRNA]</scope>
    <scope>FUNCTION</scope>
    <scope>TISSUE SPECIFICITY</scope>
    <scope>DOMAIN</scope>
    <scope>INTERACTION WITH IRF3; TLR2 AND TLR3</scope>
</reference>
<reference key="2">
    <citation type="journal article" date="2003" name="Nat. Immunol.">
        <title>TICAM-1, an adapter molecule that participates in Toll-like receptor 3 mediated interferon-beta induction.</title>
        <authorList>
            <person name="Oshiumi H."/>
            <person name="Matsumoto M."/>
            <person name="Funami K."/>
            <person name="Akazawa T."/>
            <person name="Seya T."/>
        </authorList>
    </citation>
    <scope>NUCLEOTIDE SEQUENCE [MRNA]</scope>
    <scope>FUNCTION</scope>
    <scope>INTERACTION WITH TLR3</scope>
    <scope>SUBUNIT</scope>
    <scope>TISSUE SPECIFICITY</scope>
    <scope>DOMAIN</scope>
    <scope>MUTAGENESIS OF PRO-434</scope>
    <source>
        <tissue>Lung</tissue>
    </source>
</reference>
<reference key="3">
    <citation type="journal article" date="2008" name="Immunogenetics">
        <title>Natural selection in the TLR-related genes in the course of primate evolution.</title>
        <authorList>
            <person name="Nakajima T."/>
            <person name="Ohtani H."/>
            <person name="Satta Y."/>
            <person name="Uno Y."/>
            <person name="Akari H."/>
            <person name="Ishida T."/>
            <person name="Kimura A."/>
        </authorList>
    </citation>
    <scope>NUCLEOTIDE SEQUENCE [MRNA]</scope>
</reference>
<reference key="4">
    <citation type="journal article" date="2003" name="Oncogene">
        <title>Large-scale identification and characterization of human genes that activate NF-kappaB and MAPK signaling pathways.</title>
        <authorList>
            <person name="Matsuda A."/>
            <person name="Suzuki Y."/>
            <person name="Honda G."/>
            <person name="Muramatsu S."/>
            <person name="Matsuzaki O."/>
            <person name="Nagano Y."/>
            <person name="Doi T."/>
            <person name="Shimotohno K."/>
            <person name="Harada T."/>
            <person name="Nishida E."/>
            <person name="Hayashi H."/>
            <person name="Sugano S."/>
        </authorList>
    </citation>
    <scope>NUCLEOTIDE SEQUENCE [LARGE SCALE MRNA]</scope>
    <source>
        <tissue>Lung</tissue>
    </source>
</reference>
<reference key="5">
    <citation type="journal article" date="2004" name="Genome Res.">
        <title>The status, quality, and expansion of the NIH full-length cDNA project: the Mammalian Gene Collection (MGC).</title>
        <authorList>
            <consortium name="The MGC Project Team"/>
        </authorList>
    </citation>
    <scope>NUCLEOTIDE SEQUENCE [LARGE SCALE MRNA]</scope>
    <source>
        <tissue>Ovary</tissue>
        <tissue>Testis</tissue>
    </source>
</reference>
<reference key="6">
    <citation type="submission" date="2002-03" db="EMBL/GenBank/DDBJ databases">
        <title>PRVTIRB is a differentially expressed gene.</title>
        <authorList>
            <person name="Begum N.A."/>
        </authorList>
    </citation>
    <scope>NUCLEOTIDE SEQUENCE [MRNA] OF 137-712</scope>
</reference>
<reference key="7">
    <citation type="submission" date="1998-06" db="EMBL/GenBank/DDBJ databases">
        <authorList>
            <person name="Yu W."/>
            <person name="Gibbs R.A."/>
        </authorList>
    </citation>
    <scope>NUCLEOTIDE SEQUENCE [LARGE SCALE MRNA] OF 297-712</scope>
    <source>
        <tissue>Brain</tissue>
    </source>
</reference>
<reference key="8">
    <citation type="journal article" date="2003" name="J. Biol. Chem.">
        <title>TIRP, a novel Toll/interleukin-1 receptor (TIR) domain-containing adapter protein involved in TIR signaling.</title>
        <authorList>
            <person name="Bin L.-H."/>
            <person name="Xu L.-G."/>
            <person name="Shu H.-B."/>
        </authorList>
    </citation>
    <scope>INTERACTION WITH TICAM2</scope>
</reference>
<reference key="9">
    <citation type="journal article" date="2003" name="J. Immunol.">
        <title>Toll/IL-1 receptor domain-containing adapter inducing IFN-beta (TRIF) associates with TNF receptor-associated factor 6 and TANK-binding kinase 1, and activates two distinct transcription factors, NF-kappa B and IFN-regulatory factor-3, in the Toll-like receptor signaling.</title>
        <authorList>
            <person name="Sato S."/>
            <person name="Sugiyama M."/>
            <person name="Yamamoto M."/>
            <person name="Watanabe Y."/>
            <person name="Kawai T."/>
            <person name="Takeda K."/>
            <person name="Akira S."/>
        </authorList>
    </citation>
    <scope>INTERACTION WITH TRAF6 AND TBK1</scope>
    <scope>PHOSPHORYLATION BY TBK1</scope>
    <scope>MOTIF</scope>
    <scope>MUTAGENESIS OF GLU-88; GLU-252 AND GLU-303</scope>
</reference>
<reference key="10">
    <citation type="journal article" date="2004" name="FEBS Lett.">
        <title>PIASy represses TRIF-induced ISRE and NF-kappaB activation but not apoptosis.</title>
        <authorList>
            <person name="Zhang J."/>
            <person name="Xu L.G."/>
            <person name="Han K.J."/>
            <person name="Wei X."/>
            <person name="Shu H.B."/>
        </authorList>
    </citation>
    <scope>INTERACTION WITH PIAS4</scope>
</reference>
<reference key="11">
    <citation type="journal article" date="2004" name="J. Biol. Chem.">
        <title>Mechanisms of the TRIF-induced interferon-stimulated response element and NF-kappaB activation and apoptosis pathways.</title>
        <authorList>
            <person name="Han K.J."/>
            <person name="Su X."/>
            <person name="Xu L.-G."/>
            <person name="Bin L.H."/>
            <person name="Zhang J."/>
            <person name="Shu H.-B."/>
        </authorList>
    </citation>
    <scope>FUNCTION</scope>
    <scope>INTERACTION WITH IKBKB; IKBKE; IRF3; IRF7; TBK1 AND TRAF6</scope>
    <scope>DOMAIN</scope>
</reference>
<reference key="12">
    <citation type="journal article" date="2004" name="Proc. Natl. Acad. Sci. U.S.A.">
        <title>Toll-like receptor 3-mediated activation of NF-kappaB and IRF3 diverges at Toll-IL-1 receptor domain-containing adapter inducing IFN-beta.</title>
        <authorList>
            <person name="Jiang Z."/>
            <person name="Mak T.W."/>
            <person name="Sen G."/>
            <person name="Li X."/>
        </authorList>
    </citation>
    <scope>INTERACTION WITH TRAF6</scope>
    <scope>MUTAGENESIS OF GLU-252 AND GLU-493</scope>
</reference>
<reference key="13">
    <citation type="journal article" date="2005" name="J. Immunol.">
        <title>NF-kappaB-activating kinase-associated protein 1 participates in TLR3/Toll-IL-1 homology domain-containing adapter molecule-1-mediated IFN regulatory factor 3 activation.</title>
        <authorList>
            <person name="Sasai M."/>
            <person name="Oshiumi H."/>
            <person name="Matsumoto M."/>
            <person name="Inoue N."/>
            <person name="Fujita F."/>
            <person name="Nakanishi M."/>
            <person name="Seya T."/>
        </authorList>
    </citation>
    <scope>INTERACTION WITH AZI2</scope>
</reference>
<reference key="14">
    <citation type="journal article" date="2005" name="Proc. Natl. Acad. Sci. U.S.A.">
        <title>Immune evasion by hepatitis C virus NS3/4A protease-mediated cleavage of the Toll-like receptor 3 adaptor protein TRIF.</title>
        <authorList>
            <person name="Li K."/>
            <person name="Foy E."/>
            <person name="Ferreon J.C."/>
            <person name="Nakamura M."/>
            <person name="Ferreon A.C."/>
            <person name="Ikeda M."/>
            <person name="Ray S.C."/>
            <person name="Gale M. Jr."/>
            <person name="Lemon S.M."/>
        </authorList>
    </citation>
    <scope>INTERACTION WITH HCV NS3/4A PROTEASE (MICROBIAL INFECTION)</scope>
    <scope>MUTAGENESIS OF CYS-372</scope>
    <scope>PROTEOLYTIC CLEAVAGE (MICROBIAL INFECTION)</scope>
</reference>
<reference key="15">
    <citation type="journal article" date="2006" name="Nat. Immunol.">
        <title>The human adaptor SARM negatively regulates adaptor protein TRIF-dependent Toll-like receptor signaling.</title>
        <authorList>
            <person name="Carty M."/>
            <person name="Goodbody R."/>
            <person name="Schroeder M."/>
            <person name="Stack J."/>
            <person name="Moynagh P.N."/>
            <person name="Bowie A.G."/>
        </authorList>
    </citation>
    <scope>INTERACTION WITH SARM1</scope>
</reference>
<reference key="16">
    <citation type="journal article" date="2007" name="Nat. Rev. Immunol.">
        <title>The family of five: TIR-domain-containing adaptors in Toll-like receptor signalling.</title>
        <authorList>
            <person name="O'Neill L.A."/>
            <person name="Bowie A.G."/>
        </authorList>
    </citation>
    <scope>REVIEW</scope>
</reference>
<reference key="17">
    <citation type="journal article" date="2010" name="J. Biol. Chem.">
        <title>TRIF mediates Toll-like receptor 5-induced signaling in intestinal epithelial cells.</title>
        <authorList>
            <person name="Choi Y.J."/>
            <person name="Im E."/>
            <person name="Chung H.K."/>
            <person name="Pothoulakis C."/>
            <person name="Rhee S.H."/>
        </authorList>
    </citation>
    <scope>FUNCTION</scope>
    <scope>INTERACTION WITH TLR5</scope>
</reference>
<reference key="18">
    <citation type="journal article" date="2008" name="Proc. Natl. Acad. Sci. U.S.A.">
        <title>A quantitative atlas of mitotic phosphorylation.</title>
        <authorList>
            <person name="Dephoure N."/>
            <person name="Zhou C."/>
            <person name="Villen J."/>
            <person name="Beausoleil S.A."/>
            <person name="Bakalarski C.E."/>
            <person name="Elledge S.J."/>
            <person name="Gygi S.P."/>
        </authorList>
    </citation>
    <scope>IDENTIFICATION BY MASS SPECTROMETRY [LARGE SCALE ANALYSIS]</scope>
    <source>
        <tissue>Cervix carcinoma</tissue>
    </source>
</reference>
<reference key="19">
    <citation type="journal article" date="2011" name="PLoS ONE">
        <title>The ubiquitin-like protein PLIC-1 or ubiquilin 1 inhibits TLR3-Trif signaling.</title>
        <authorList>
            <person name="Biswas N."/>
            <person name="Liu S."/>
            <person name="Ronni T."/>
            <person name="Aussenberg S.E."/>
            <person name="Liu W."/>
            <person name="Fujita T."/>
            <person name="Wang T."/>
        </authorList>
    </citation>
    <scope>SUBCELLULAR LOCATION</scope>
    <scope>INTERACTION WITH UBQLN1</scope>
</reference>
<reference key="20">
    <citation type="journal article" date="2011" name="PLoS Pathog.">
        <title>Disruption of TLR3 signaling due to cleavage of TRIF by the hepatitis A virus protease-polymerase processing intermediate, 3CD.</title>
        <authorList>
            <person name="Qu L."/>
            <person name="Feng Z."/>
            <person name="Yamane D."/>
            <person name="Liang Y."/>
            <person name="Lanford R.E."/>
            <person name="Li K."/>
            <person name="Lemon S.M."/>
        </authorList>
    </citation>
    <scope>CLEAVAGE BY HAV PROTEIN 3CD (MICROBIAL INFECTION)</scope>
    <scope>CLEAVAGE SITES</scope>
    <scope>MUTAGENESIS OF GLN-190 AND GLN-554</scope>
</reference>
<reference key="21">
    <citation type="journal article" date="2011" name="PLoS Pathog.">
        <title>The coxsackievirus B 3C protease cleaves MAVS and TRIF to attenuate host type I interferon and apoptotic signaling.</title>
        <authorList>
            <person name="Mukherjee A."/>
            <person name="Morosky S.A."/>
            <person name="Delorme-Axford E."/>
            <person name="Dybdahl-Sissoko N."/>
            <person name="Oberste M.S."/>
            <person name="Wang T."/>
            <person name="Coyne C.B."/>
        </authorList>
    </citation>
    <scope>PROTEOLYTIC CLEAVAGE (MICROBIAL INFECTION)</scope>
    <scope>MUTAGENESIS OF GLN-653; GLN-659; GLN-672 AND GLN-702</scope>
    <scope>INTERACTION WITH CVB3 PROTEASE 3C</scope>
</reference>
<reference key="22">
    <citation type="journal article" date="2012" name="J. Biol. Chem.">
        <title>TRIM56 is an essential component of the TLR3 antiviral signaling pathway.</title>
        <authorList>
            <person name="Shen Y."/>
            <person name="Li N.L."/>
            <person name="Wang J."/>
            <person name="Liu B."/>
            <person name="Lester S."/>
            <person name="Li K."/>
        </authorList>
    </citation>
    <scope>INTERACTION WITH TRIM56</scope>
</reference>
<reference key="23">
    <citation type="journal article" date="2012" name="PLoS ONE">
        <title>TRIM38 negatively regulates TLR3-mediated IFN-beta signaling by targeting TRIF for degradation.</title>
        <authorList>
            <person name="Xue Q."/>
            <person name="Zhou Z."/>
            <person name="Lei X."/>
            <person name="Liu X."/>
            <person name="He B."/>
            <person name="Wang J."/>
            <person name="Hung T."/>
        </authorList>
    </citation>
    <scope>UBIQUITINATION BY TRIM38</scope>
    <scope>MUTAGENESIS OF ASP-281 AND ASP-289</scope>
</reference>
<reference key="24">
    <citation type="journal article" date="2014" name="J. Virol.">
        <title>Enterovirus 68 3C protease cleaves TRIF to attenuate antiviral responses mediated by Toll-like receptor 3.</title>
        <authorList>
            <person name="Xiang Z."/>
            <person name="Li L."/>
            <person name="Lei X."/>
            <person name="Zhou H."/>
            <person name="Zhou Z."/>
            <person name="He B."/>
            <person name="Wang J."/>
        </authorList>
    </citation>
    <scope>PROTEOLYTIC CLEAVAGE (MICROBIAL INFECTION)</scope>
</reference>
<reference key="25">
    <citation type="journal article" date="2015" name="EMBO Rep.">
        <title>WDFY1 mediates TLR3/4 signaling by recruiting TRIF.</title>
        <authorList>
            <person name="Hu Y.H."/>
            <person name="Zhang Y."/>
            <person name="Jiang L.Q."/>
            <person name="Wang S."/>
            <person name="Lei C.Q."/>
            <person name="Sun M.S."/>
            <person name="Shu H.B."/>
            <person name="Liu Y."/>
        </authorList>
    </citation>
    <scope>INTERACTION WITH TLR3; TICAM2; RIPK1; TRAF6 AND TBK1</scope>
</reference>
<reference key="26">
    <citation type="journal article" date="2015" name="Science">
        <title>Phosphorylation of innate immune adaptor proteins MAVS, STING, and TRIF induces IRF3 activation.</title>
        <authorList>
            <person name="Liu S."/>
            <person name="Cai X."/>
            <person name="Wu J."/>
            <person name="Cong Q."/>
            <person name="Chen X."/>
            <person name="Li T."/>
            <person name="Du F."/>
            <person name="Ren J."/>
            <person name="Wu Y.T."/>
            <person name="Grishin N.V."/>
            <person name="Chen Z.J."/>
        </authorList>
    </citation>
    <scope>FUNCTION</scope>
    <scope>DOMAIN</scope>
    <scope>INTERACTION WITH IRF3</scope>
    <scope>PHOSPHORYLATION AT SER-210</scope>
    <scope>MUTAGENESIS OF 210-SER--THR-214</scope>
</reference>
<reference key="27">
    <citation type="journal article" date="2017" name="J. Virol.">
        <title>Seneca Valley virus suppresses host type I interferon production by targeting adaptor proteins MAVS, TRIF, and TANK for cleavage.</title>
        <authorList>
            <person name="Qian S."/>
            <person name="Fan W."/>
            <person name="Liu T."/>
            <person name="Wu M."/>
            <person name="Zhang H."/>
            <person name="Cui X."/>
            <person name="Zhou Y."/>
            <person name="Hu J."/>
            <person name="Wei S."/>
            <person name="Chen H."/>
            <person name="Li X."/>
            <person name="Qian P."/>
        </authorList>
    </citation>
    <scope>INTERACTION WITH SENECA VALLEY VIRUS PROTEASE 3C (MICROBIAL INFECTION)</scope>
    <scope>PROTEOLYTIC CLEAVAGE (MICROBIAL INFECTION)</scope>
    <scope>MUTAGENESIS OF GLN-159 AND GLN-190</scope>
</reference>
<reference key="28">
    <citation type="journal article" date="2017" name="PLoS Pathog.">
        <title>TRIM32-TAX1BP1-dependent selective autophagic degradation of TRIF negatively regulates TLR3/4-mediated innate immune responses.</title>
        <authorList>
            <person name="Yang Q."/>
            <person name="Liu T.T."/>
            <person name="Lin H."/>
            <person name="Zhang M."/>
            <person name="Wei J."/>
            <person name="Luo W.W."/>
            <person name="Hu Y.H."/>
            <person name="Zhong B."/>
            <person name="Hu M.M."/>
            <person name="Shu H.B."/>
        </authorList>
    </citation>
    <scope>INTERACTION WITH TAX1BP1 AND TRIM32</scope>
</reference>
<reference key="29">
    <citation type="journal article" date="2017" name="J. Immunol.">
        <title>TRIM8 Negatively Regulates TLR3/4-Mediated Innate Immune Response by Blocking TRIF-TBK1 Interaction.</title>
        <authorList>
            <person name="Ye W."/>
            <person name="Hu M.M."/>
            <person name="Lei C.Q."/>
            <person name="Zhou Q."/>
            <person name="Lin H."/>
            <person name="Sun M.S."/>
            <person name="Shu H.B."/>
        </authorList>
    </citation>
    <scope>FUNCTION</scope>
    <scope>INTERACTION WITH TRIM8</scope>
    <scope>UBIQUITINATION BY TRIM8</scope>
</reference>
<reference key="30">
    <citation type="journal article" date="2022" name="Int. J. Mol. Sci.">
        <title>PAUF Induces Migration of Human Pancreatic Cancer Cells Exclusively via the TLR4/MyD88/NF-kappaB Signaling Pathway.</title>
        <authorList>
            <person name="Youn S.E."/>
            <person name="Jiang F."/>
            <person name="Won H.Y."/>
            <person name="Hong D.E."/>
            <person name="Kang T.H."/>
            <person name="Park Y.Y."/>
            <person name="Koh S.S."/>
        </authorList>
    </citation>
    <scope>INTERACTION WITH TLR4</scope>
</reference>
<reference key="31">
    <citation type="journal article" date="2022" name="Viruses">
        <title>DDX50 Is a Viral Restriction Factor That Enhances IRF3 Activation.</title>
        <authorList>
            <person name="Pallett M.A."/>
            <person name="Lu Y."/>
            <person name="Smith G.L."/>
        </authorList>
    </citation>
    <scope>FUNCTION</scope>
    <scope>INTERACTION WITH DDX50</scope>
</reference>
<reference key="32">
    <citation type="journal article" date="2013" name="Acta Crystallogr. D">
        <title>The TLR signalling adaptor TRIF/TICAM-1 has an N-terminal helical domain with structural similarity to IFIT proteins.</title>
        <authorList>
            <person name="Ullah M.O."/>
            <person name="Ve T."/>
            <person name="Mangan M."/>
            <person name="Alaidarous M."/>
            <person name="Sweet M.J."/>
            <person name="Mansell A."/>
            <person name="Kobe B."/>
        </authorList>
    </citation>
    <scope>X-RAY CRYSTALLOGRAPHY (2.23 ANGSTROMS) OF 1-153</scope>
    <scope>TRIF-NTD REGION</scope>
</reference>
<reference evidence="34" key="33">
    <citation type="journal article" date="2016" name="Proc. Natl. Acad. Sci. U.S.A.">
        <title>Structural basis for concerted recruitment and activation of IRF-3 by innate immune adaptor proteins.</title>
        <authorList>
            <person name="Zhao B."/>
            <person name="Shu C."/>
            <person name="Gao X."/>
            <person name="Sankaran B."/>
            <person name="Du F."/>
            <person name="Shelton C.L."/>
            <person name="Herr A.B."/>
            <person name="Ji J.Y."/>
            <person name="Li P."/>
        </authorList>
    </citation>
    <scope>X-RAY CRYSTALLOGRAPHY (1.60 ANGSTROMS) OF 199-219 IN COMPLEX WITH IRF3</scope>
    <scope>INTERACTION WITH IRF3</scope>
    <scope>PHOSPHORYLATION AT SER-210</scope>
    <scope>MUTAGENESIS OF SER-202 AND SER-210</scope>
</reference>
<reference key="34">
    <citation type="journal article" date="2006" name="Science">
        <title>The consensus coding sequences of human breast and colorectal cancers.</title>
        <authorList>
            <person name="Sjoeblom T."/>
            <person name="Jones S."/>
            <person name="Wood L.D."/>
            <person name="Parsons D.W."/>
            <person name="Lin J."/>
            <person name="Barber T.D."/>
            <person name="Mandelker D."/>
            <person name="Leary R.J."/>
            <person name="Ptak J."/>
            <person name="Silliman N."/>
            <person name="Szabo S."/>
            <person name="Buckhaults P."/>
            <person name="Farrell C."/>
            <person name="Meeh P."/>
            <person name="Markowitz S.D."/>
            <person name="Willis J."/>
            <person name="Dawson D."/>
            <person name="Willson J.K.V."/>
            <person name="Gazdar A.F."/>
            <person name="Hartigan J."/>
            <person name="Wu L."/>
            <person name="Liu C."/>
            <person name="Parmigiani G."/>
            <person name="Park B.H."/>
            <person name="Bachman K.E."/>
            <person name="Papadopoulos N."/>
            <person name="Vogelstein B."/>
            <person name="Kinzler K.W."/>
            <person name="Velculescu V.E."/>
        </authorList>
    </citation>
    <scope>VARIANT [LARGE SCALE ANALYSIS] ILE-46</scope>
</reference>
<reference key="35">
    <citation type="journal article" date="2011" name="J. Clin. Invest.">
        <title>Herpes simplex encephalitis in children with autosomal recessive and dominant TRIF deficiency.</title>
        <authorList>
            <person name="Sancho-Shimizu V."/>
            <person name="Perez de Diego R."/>
            <person name="Lorenzo L."/>
            <person name="Halwani R."/>
            <person name="Alangari A."/>
            <person name="Israelsson E."/>
            <person name="Fabrega S."/>
            <person name="Cardon A."/>
            <person name="Maluenda J."/>
            <person name="Tatematsu M."/>
            <person name="Mahvelati F."/>
            <person name="Herman M."/>
            <person name="Ciancanelli M."/>
            <person name="Guo Y."/>
            <person name="AlSum Z."/>
            <person name="Alkhamis N."/>
            <person name="Al-Makadma A.S."/>
            <person name="Ghadiri A."/>
            <person name="Boucherit S."/>
            <person name="Plancoulaine S."/>
            <person name="Picard C."/>
            <person name="Rozenberg F."/>
            <person name="Tardieu M."/>
            <person name="Lebon P."/>
            <person name="Jouanguy E."/>
            <person name="Rezaei N."/>
            <person name="Seya T."/>
            <person name="Matsumoto M."/>
            <person name="Chaussabel D."/>
            <person name="Puel A."/>
            <person name="Zhang S.Y."/>
            <person name="Abel L."/>
            <person name="Al-Muhsen S."/>
            <person name="Casanova J.L."/>
        </authorList>
    </citation>
    <scope>VARIANT IIAE6 LEU-186</scope>
</reference>
<reference key="36">
    <citation type="journal article" date="2020" name="Science">
        <title>Inborn errors of type I IFN immunity in patients with life-threatening COVID-19.</title>
        <authorList>
            <consortium name="COVID-STORM Clinicians"/>
            <consortium name="COVID Clinicians"/>
            <consortium name="Imagine COVID Group"/>
            <consortium name="French COVID Cohort Study Group"/>
            <consortium name="CoV-Contact Cohort"/>
            <consortium name="Amsterdam UMC Covid-19 Biobank"/>
            <consortium name="COVID Human Genetic Effort"/>
            <consortium name="NIAID-USUHS/TAGC COVID Immunity Group"/>
            <person name="Zhang Q."/>
            <person name="Bastard P."/>
            <person name="Liu Z."/>
            <person name="Le Pen J."/>
            <person name="Moncada-Velez M."/>
            <person name="Chen J."/>
            <person name="Ogishi M."/>
            <person name="Sabli I.K.D."/>
            <person name="Hodeib S."/>
            <person name="Korol C."/>
            <person name="Rosain J."/>
            <person name="Bilguvar K."/>
            <person name="Ye J."/>
            <person name="Bolze A."/>
            <person name="Bigio B."/>
            <person name="Yang R."/>
            <person name="Arias A.A."/>
            <person name="Zhou Q."/>
            <person name="Zhang Y."/>
            <person name="Onodi F."/>
            <person name="Korniotis S."/>
            <person name="Karpf L."/>
            <person name="Philippot Q."/>
            <person name="Chbihi M."/>
            <person name="Bonnet-Madin L."/>
            <person name="Dorgham K."/>
            <person name="Smith N."/>
            <person name="Schneider W.M."/>
            <person name="Razooky B.S."/>
            <person name="Hoffmann H.H."/>
            <person name="Michailidis E."/>
            <person name="Moens L."/>
            <person name="Han J.E."/>
            <person name="Lorenzo L."/>
            <person name="Bizien L."/>
            <person name="Meade P."/>
            <person name="Neehus A.L."/>
            <person name="Ugurbil A.C."/>
            <person name="Corneau A."/>
            <person name="Kerner G."/>
            <person name="Zhang P."/>
            <person name="Rapaport F."/>
            <person name="Seeleuthner Y."/>
            <person name="Manry J."/>
            <person name="Masson C."/>
            <person name="Schmitt Y."/>
            <person name="Schlueter A."/>
            <person name="Le Voyer T."/>
            <person name="Khan T."/>
            <person name="Li J."/>
            <person name="Fellay J."/>
            <person name="Roussel L."/>
            <person name="Shahrooei M."/>
            <person name="Alosaimi M.F."/>
            <person name="Mansouri D."/>
            <person name="Al-Saud H."/>
            <person name="Al-Mulla F."/>
            <person name="Almourfi F."/>
            <person name="Al-Muhsen S.Z."/>
            <person name="Alsohime F."/>
            <person name="Al Turki S."/>
            <person name="Hasanato R."/>
            <person name="van de Beek D."/>
            <person name="Biondi A."/>
            <person name="Bettini L.R."/>
            <person name="D'Angio' M."/>
            <person name="Bonfanti P."/>
            <person name="Imberti L."/>
            <person name="Sottini A."/>
            <person name="Paghera S."/>
            <person name="Quiros-Roldan E."/>
            <person name="Rossi C."/>
            <person name="Oler A.J."/>
            <person name="Tompkins M.F."/>
            <person name="Alba C."/>
            <person name="Vandernoot I."/>
            <person name="Goffard J.C."/>
            <person name="Smits G."/>
            <person name="Migeotte I."/>
            <person name="Haerynck F."/>
            <person name="Soler-Palacin P."/>
            <person name="Martin-Nalda A."/>
            <person name="Colobran R."/>
            <person name="Morange P.E."/>
            <person name="Keles S."/>
            <person name="Coelkesen F."/>
            <person name="Ozcelik T."/>
            <person name="Yasar K.K."/>
            <person name="Senoglu S."/>
            <person name="Karabela S.N."/>
            <person name="Rodriguez-Gallego C."/>
            <person name="Novelli G."/>
            <person name="Hraiech S."/>
            <person name="Tandjaoui-Lambiotte Y."/>
            <person name="Duval X."/>
            <person name="Laouenan C."/>
            <person name="Snow A.L."/>
            <person name="Dalgard C.L."/>
            <person name="Milner J.D."/>
            <person name="Vinh D.C."/>
            <person name="Mogensen T.H."/>
            <person name="Marr N."/>
            <person name="Spaan A.N."/>
            <person name="Boisson B."/>
            <person name="Boisson-Dupuis S."/>
            <person name="Bustamante J."/>
            <person name="Puel A."/>
            <person name="Ciancanelli M.J."/>
            <person name="Meyts I."/>
            <person name="Maniatis T."/>
            <person name="Soumelis V."/>
            <person name="Amara A."/>
            <person name="Nussenzweig M."/>
            <person name="Garcia-Sastre A."/>
            <person name="Krammer F."/>
            <person name="Pujol A."/>
            <person name="Duffy D."/>
            <person name="Lifton R.P."/>
            <person name="Zhang S.Y."/>
            <person name="Gorochov G."/>
            <person name="Beziat V."/>
            <person name="Jouanguy E."/>
            <person name="Sancho-Shimizu V."/>
            <person name="Rice C.M."/>
            <person name="Abel L."/>
            <person name="Notarangelo L.D."/>
            <person name="Cobat A."/>
            <person name="Su H.C."/>
            <person name="Casanova J.L."/>
        </authorList>
    </citation>
    <scope>VARIANTS ILE-4; CYS-60; GLN-71; MET-80; THR-111; ARG-141 DEL; MET-157; LEU-186; LEU-302; ILE-377; PRO-386; LYS-392; ASN-465; ASN-557; LEU-595; TRP-598 AND ARG-702</scope>
    <scope>CHARACTERIZATION OF VARIANTS ILE-4; CYS-60; GLN-71; MET-80; THR-111; ARG-141 DEL; MET-157; LEU-186; LEU-302; ILE-377; PRO-386; LYS-392; ASN-465; ASN-557; LEU-595; TRP-598 AND ARG-702</scope>
</reference>
<proteinExistence type="evidence at protein level"/>
<organism>
    <name type="scientific">Homo sapiens</name>
    <name type="common">Human</name>
    <dbReference type="NCBI Taxonomy" id="9606"/>
    <lineage>
        <taxon>Eukaryota</taxon>
        <taxon>Metazoa</taxon>
        <taxon>Chordata</taxon>
        <taxon>Craniata</taxon>
        <taxon>Vertebrata</taxon>
        <taxon>Euteleostomi</taxon>
        <taxon>Mammalia</taxon>
        <taxon>Eutheria</taxon>
        <taxon>Euarchontoglires</taxon>
        <taxon>Primates</taxon>
        <taxon>Haplorrhini</taxon>
        <taxon>Catarrhini</taxon>
        <taxon>Hominidae</taxon>
        <taxon>Homo</taxon>
    </lineage>
</organism>
<protein>
    <recommendedName>
        <fullName>TIR domain-containing adapter molecule 1</fullName>
        <shortName>TICAM-1</shortName>
    </recommendedName>
    <alternativeName>
        <fullName>Proline-rich, vinculin and TIR domain-containing protein B</fullName>
    </alternativeName>
    <alternativeName>
        <fullName>Putative NF-kappa-B-activating protein 502H</fullName>
    </alternativeName>
    <alternativeName>
        <fullName>Toll-interleukin-1 receptor domain-containing adapter protein inducing interferon beta</fullName>
        <shortName>MyD88-3</shortName>
        <shortName>TIR domain-containing adapter protein inducing IFN-beta</shortName>
    </alternativeName>
</protein>
<evidence type="ECO:0000250" key="1">
    <source>
        <dbReference type="UniProtKB" id="Q80UF7"/>
    </source>
</evidence>
<evidence type="ECO:0000255" key="2">
    <source>
        <dbReference type="PROSITE-ProRule" id="PRU00204"/>
    </source>
</evidence>
<evidence type="ECO:0000256" key="3">
    <source>
        <dbReference type="SAM" id="MobiDB-lite"/>
    </source>
</evidence>
<evidence type="ECO:0000269" key="4">
    <source>
    </source>
</evidence>
<evidence type="ECO:0000269" key="5">
    <source>
    </source>
</evidence>
<evidence type="ECO:0000269" key="6">
    <source>
    </source>
</evidence>
<evidence type="ECO:0000269" key="7">
    <source>
    </source>
</evidence>
<evidence type="ECO:0000269" key="8">
    <source>
    </source>
</evidence>
<evidence type="ECO:0000269" key="9">
    <source>
    </source>
</evidence>
<evidence type="ECO:0000269" key="10">
    <source>
    </source>
</evidence>
<evidence type="ECO:0000269" key="11">
    <source>
    </source>
</evidence>
<evidence type="ECO:0000269" key="12">
    <source>
    </source>
</evidence>
<evidence type="ECO:0000269" key="13">
    <source>
    </source>
</evidence>
<evidence type="ECO:0000269" key="14">
    <source>
    </source>
</evidence>
<evidence type="ECO:0000269" key="15">
    <source>
    </source>
</evidence>
<evidence type="ECO:0000269" key="16">
    <source>
    </source>
</evidence>
<evidence type="ECO:0000269" key="17">
    <source>
    </source>
</evidence>
<evidence type="ECO:0000269" key="18">
    <source>
    </source>
</evidence>
<evidence type="ECO:0000269" key="19">
    <source>
    </source>
</evidence>
<evidence type="ECO:0000269" key="20">
    <source>
    </source>
</evidence>
<evidence type="ECO:0000269" key="21">
    <source>
    </source>
</evidence>
<evidence type="ECO:0000269" key="22">
    <source>
    </source>
</evidence>
<evidence type="ECO:0000269" key="23">
    <source>
    </source>
</evidence>
<evidence type="ECO:0000269" key="24">
    <source>
    </source>
</evidence>
<evidence type="ECO:0000269" key="25">
    <source>
    </source>
</evidence>
<evidence type="ECO:0000269" key="26">
    <source>
    </source>
</evidence>
<evidence type="ECO:0000269" key="27">
    <source>
    </source>
</evidence>
<evidence type="ECO:0000269" key="28">
    <source>
    </source>
</evidence>
<evidence type="ECO:0000269" key="29">
    <source>
    </source>
</evidence>
<evidence type="ECO:0000269" key="30">
    <source>
    </source>
</evidence>
<evidence type="ECO:0000269" key="31">
    <source>
    </source>
</evidence>
<evidence type="ECO:0000269" key="32">
    <source>
    </source>
</evidence>
<evidence type="ECO:0000305" key="33"/>
<evidence type="ECO:0007744" key="34">
    <source>
        <dbReference type="PDB" id="5JEL"/>
    </source>
</evidence>
<evidence type="ECO:0007829" key="35">
    <source>
        <dbReference type="PDB" id="2M1X"/>
    </source>
</evidence>
<evidence type="ECO:0007829" key="36">
    <source>
        <dbReference type="PDB" id="3RC4"/>
    </source>
</evidence>
<evidence type="ECO:0007829" key="37">
    <source>
        <dbReference type="PDB" id="4BSX"/>
    </source>
</evidence>
<evidence type="ECO:0007829" key="38">
    <source>
        <dbReference type="PDB" id="5JEL"/>
    </source>
</evidence>
<dbReference type="EMBL" id="AB093555">
    <property type="protein sequence ID" value="BAC44839.1"/>
    <property type="molecule type" value="mRNA"/>
</dbReference>
<dbReference type="EMBL" id="AB086380">
    <property type="protein sequence ID" value="BAC55579.1"/>
    <property type="molecule type" value="mRNA"/>
</dbReference>
<dbReference type="EMBL" id="AB446484">
    <property type="protein sequence ID" value="BAG55261.1"/>
    <property type="molecule type" value="mRNA"/>
</dbReference>
<dbReference type="EMBL" id="AB097023">
    <property type="protein sequence ID" value="BAC77376.1"/>
    <property type="molecule type" value="mRNA"/>
</dbReference>
<dbReference type="EMBL" id="BC009860">
    <property type="protein sequence ID" value="AAH09860.2"/>
    <property type="molecule type" value="mRNA"/>
</dbReference>
<dbReference type="EMBL" id="BC136556">
    <property type="protein sequence ID" value="AAI36557.1"/>
    <property type="molecule type" value="mRNA"/>
</dbReference>
<dbReference type="EMBL" id="BC136557">
    <property type="protein sequence ID" value="AAI36558.1"/>
    <property type="molecule type" value="mRNA"/>
</dbReference>
<dbReference type="EMBL" id="AF492646">
    <property type="protein sequence ID" value="AAO85488.1"/>
    <property type="status" value="ALT_FRAME"/>
    <property type="molecule type" value="mRNA"/>
</dbReference>
<dbReference type="EMBL" id="AF070530">
    <property type="protein sequence ID" value="AAC28630.1"/>
    <property type="molecule type" value="mRNA"/>
</dbReference>
<dbReference type="CCDS" id="CCDS12136.1"/>
<dbReference type="RefSeq" id="NP_891549.1">
    <property type="nucleotide sequence ID" value="NM_182919.4"/>
</dbReference>
<dbReference type="PDB" id="2M1X">
    <property type="method" value="NMR"/>
    <property type="chains" value="A=387-545"/>
</dbReference>
<dbReference type="PDB" id="2M63">
    <property type="method" value="NMR"/>
    <property type="chains" value="A=1-156"/>
</dbReference>
<dbReference type="PDB" id="3RC4">
    <property type="method" value="X-ray"/>
    <property type="resolution" value="1.50 A"/>
    <property type="chains" value="B=360-372"/>
</dbReference>
<dbReference type="PDB" id="4BSX">
    <property type="method" value="X-ray"/>
    <property type="resolution" value="2.23 A"/>
    <property type="chains" value="A/B/C/D=1-153"/>
</dbReference>
<dbReference type="PDB" id="4C0M">
    <property type="method" value="X-ray"/>
    <property type="resolution" value="2.80 A"/>
    <property type="chains" value="A/B/C/D=1-153"/>
</dbReference>
<dbReference type="PDB" id="5JEL">
    <property type="method" value="X-ray"/>
    <property type="resolution" value="1.60 A"/>
    <property type="chains" value="B=199-217"/>
</dbReference>
<dbReference type="PDB" id="9DK8">
    <property type="method" value="EM"/>
    <property type="resolution" value="3.30 A"/>
    <property type="chains" value="A/B/C/D/E/F=1-545"/>
</dbReference>
<dbReference type="PDBsum" id="2M1X"/>
<dbReference type="PDBsum" id="2M63"/>
<dbReference type="PDBsum" id="3RC4"/>
<dbReference type="PDBsum" id="4BSX"/>
<dbReference type="PDBsum" id="4C0M"/>
<dbReference type="PDBsum" id="5JEL"/>
<dbReference type="PDBsum" id="9DK8"/>
<dbReference type="BMRB" id="Q8IUC6"/>
<dbReference type="EMDB" id="EMD-46946"/>
<dbReference type="SMR" id="Q8IUC6"/>
<dbReference type="BioGRID" id="127114">
    <property type="interactions" value="53"/>
</dbReference>
<dbReference type="ComplexPortal" id="CPX-10331">
    <property type="entry name" value="Triffosome complex"/>
</dbReference>
<dbReference type="CORUM" id="Q8IUC6"/>
<dbReference type="DIP" id="DIP-33490N"/>
<dbReference type="FunCoup" id="Q8IUC6">
    <property type="interactions" value="589"/>
</dbReference>
<dbReference type="IntAct" id="Q8IUC6">
    <property type="interactions" value="18"/>
</dbReference>
<dbReference type="MINT" id="Q8IUC6"/>
<dbReference type="STRING" id="9606.ENSP00000248244"/>
<dbReference type="GlyGen" id="Q8IUC6">
    <property type="glycosylation" value="4 sites"/>
</dbReference>
<dbReference type="iPTMnet" id="Q8IUC6"/>
<dbReference type="PhosphoSitePlus" id="Q8IUC6"/>
<dbReference type="BioMuta" id="TICAM1"/>
<dbReference type="DMDM" id="74727957"/>
<dbReference type="jPOST" id="Q8IUC6"/>
<dbReference type="MassIVE" id="Q8IUC6"/>
<dbReference type="PaxDb" id="9606-ENSP00000248244"/>
<dbReference type="PeptideAtlas" id="Q8IUC6"/>
<dbReference type="ProteomicsDB" id="70544"/>
<dbReference type="Pumba" id="Q8IUC6"/>
<dbReference type="Antibodypedia" id="11536">
    <property type="antibodies" value="353 antibodies from 42 providers"/>
</dbReference>
<dbReference type="DNASU" id="148022"/>
<dbReference type="Ensembl" id="ENST00000248244.6">
    <property type="protein sequence ID" value="ENSP00000248244.4"/>
    <property type="gene ID" value="ENSG00000127666.11"/>
</dbReference>
<dbReference type="GeneID" id="148022"/>
<dbReference type="KEGG" id="hsa:148022"/>
<dbReference type="MANE-Select" id="ENST00000248244.6">
    <property type="protein sequence ID" value="ENSP00000248244.4"/>
    <property type="RefSeq nucleotide sequence ID" value="NM_182919.4"/>
    <property type="RefSeq protein sequence ID" value="NP_891549.1"/>
</dbReference>
<dbReference type="UCSC" id="uc002mbi.5">
    <property type="organism name" value="human"/>
</dbReference>
<dbReference type="AGR" id="HGNC:18348"/>
<dbReference type="CTD" id="148022"/>
<dbReference type="DisGeNET" id="148022"/>
<dbReference type="GeneCards" id="TICAM1"/>
<dbReference type="HGNC" id="HGNC:18348">
    <property type="gene designation" value="TICAM1"/>
</dbReference>
<dbReference type="HPA" id="ENSG00000127666">
    <property type="expression patterns" value="Tissue enhanced (esophagus)"/>
</dbReference>
<dbReference type="MalaCards" id="TICAM1"/>
<dbReference type="MIM" id="607601">
    <property type="type" value="gene"/>
</dbReference>
<dbReference type="MIM" id="614850">
    <property type="type" value="phenotype"/>
</dbReference>
<dbReference type="neXtProt" id="NX_Q8IUC6"/>
<dbReference type="OpenTargets" id="ENSG00000127666"/>
<dbReference type="Orphanet" id="1930">
    <property type="disease" value="Herpes simplex virus encephalitis"/>
</dbReference>
<dbReference type="PharmGKB" id="PA142670812"/>
<dbReference type="VEuPathDB" id="HostDB:ENSG00000127666"/>
<dbReference type="eggNOG" id="ENOG502RXF3">
    <property type="taxonomic scope" value="Eukaryota"/>
</dbReference>
<dbReference type="GeneTree" id="ENSGT00940000162411"/>
<dbReference type="HOGENOM" id="CLU_022539_0_0_1"/>
<dbReference type="InParanoid" id="Q8IUC6"/>
<dbReference type="OMA" id="TRHGWQD"/>
<dbReference type="OrthoDB" id="9906976at2759"/>
<dbReference type="PAN-GO" id="Q8IUC6">
    <property type="GO annotations" value="9 GO annotations based on evolutionary models"/>
</dbReference>
<dbReference type="PhylomeDB" id="Q8IUC6"/>
<dbReference type="TreeFam" id="TF336953"/>
<dbReference type="PathwayCommons" id="Q8IUC6"/>
<dbReference type="Reactome" id="R-HSA-140534">
    <property type="pathway name" value="Caspase activation via Death Receptors in the presence of ligand"/>
</dbReference>
<dbReference type="Reactome" id="R-HSA-166166">
    <property type="pathway name" value="MyD88-independent TLR4 cascade"/>
</dbReference>
<dbReference type="Reactome" id="R-HSA-168164">
    <property type="pathway name" value="Toll Like Receptor 3 (TLR3) Cascade"/>
</dbReference>
<dbReference type="Reactome" id="R-HSA-168927">
    <property type="pathway name" value="TICAM1, RIP1-mediated IKK complex recruitment"/>
</dbReference>
<dbReference type="Reactome" id="R-HSA-1810476">
    <property type="pathway name" value="RIP-mediated NFkB activation via ZBP1"/>
</dbReference>
<dbReference type="Reactome" id="R-HSA-2562578">
    <property type="pathway name" value="TRIF-mediated programmed cell death"/>
</dbReference>
<dbReference type="Reactome" id="R-HSA-5602566">
    <property type="pathway name" value="TICAM1 deficiency - HSE"/>
</dbReference>
<dbReference type="Reactome" id="R-HSA-5602571">
    <property type="pathway name" value="TRAF3 deficiency - HSE"/>
</dbReference>
<dbReference type="Reactome" id="R-HSA-9013957">
    <property type="pathway name" value="TLR3-mediated TICAM1-dependent programmed cell death"/>
</dbReference>
<dbReference type="Reactome" id="R-HSA-9013973">
    <property type="pathway name" value="TICAM1-dependent activation of IRF3/IRF7"/>
</dbReference>
<dbReference type="Reactome" id="R-HSA-9014325">
    <property type="pathway name" value="TICAM1,TRAF6-dependent induction of TAK1 complex"/>
</dbReference>
<dbReference type="Reactome" id="R-HSA-936964">
    <property type="pathway name" value="Activation of IRF3, IRF7 mediated by TBK1, IKKEpsilon (IKBKE)"/>
</dbReference>
<dbReference type="Reactome" id="R-HSA-937041">
    <property type="pathway name" value="IKK complex recruitment mediated by RIP1"/>
</dbReference>
<dbReference type="Reactome" id="R-HSA-937072">
    <property type="pathway name" value="TRAF6-mediated induction of TAK1 complex within TLR4 complex"/>
</dbReference>
<dbReference type="Reactome" id="R-HSA-975163">
    <property type="pathway name" value="IRAK2 mediated activation of TAK1 complex upon TLR7/8 or 9 stimulation"/>
</dbReference>
<dbReference type="Reactome" id="R-HSA-9824878">
    <property type="pathway name" value="Regulation of TBK1, IKKEpsilon (IKBKE)-mediated activation of IRF3, IRF7"/>
</dbReference>
<dbReference type="Reactome" id="R-HSA-9828211">
    <property type="pathway name" value="Regulation of TBK1, IKKEpsilon-mediated activation of IRF3, IRF7 upon TLR3 ligation"/>
</dbReference>
<dbReference type="SignaLink" id="Q8IUC6"/>
<dbReference type="SIGNOR" id="Q8IUC6"/>
<dbReference type="BioGRID-ORCS" id="148022">
    <property type="hits" value="16 hits in 1159 CRISPR screens"/>
</dbReference>
<dbReference type="ChiTaRS" id="TICAM1">
    <property type="organism name" value="human"/>
</dbReference>
<dbReference type="EvolutionaryTrace" id="Q8IUC6"/>
<dbReference type="GenomeRNAi" id="148022"/>
<dbReference type="Pharos" id="Q8IUC6">
    <property type="development level" value="Tbio"/>
</dbReference>
<dbReference type="PRO" id="PR:Q8IUC6"/>
<dbReference type="Proteomes" id="UP000005640">
    <property type="component" value="Chromosome 19"/>
</dbReference>
<dbReference type="RNAct" id="Q8IUC6">
    <property type="molecule type" value="protein"/>
</dbReference>
<dbReference type="Bgee" id="ENSG00000127666">
    <property type="expression patterns" value="Expressed in lower esophagus mucosa and 152 other cell types or tissues"/>
</dbReference>
<dbReference type="ExpressionAtlas" id="Q8IUC6">
    <property type="expression patterns" value="baseline and differential"/>
</dbReference>
<dbReference type="GO" id="GO:0005776">
    <property type="term" value="C:autophagosome"/>
    <property type="evidence" value="ECO:0007669"/>
    <property type="project" value="UniProtKB-SubCell"/>
</dbReference>
<dbReference type="GO" id="GO:0005829">
    <property type="term" value="C:cytosol"/>
    <property type="evidence" value="ECO:0000304"/>
    <property type="project" value="Reactome"/>
</dbReference>
<dbReference type="GO" id="GO:0005769">
    <property type="term" value="C:early endosome"/>
    <property type="evidence" value="ECO:0000314"/>
    <property type="project" value="UniProt"/>
</dbReference>
<dbReference type="GO" id="GO:0005768">
    <property type="term" value="C:endosome"/>
    <property type="evidence" value="ECO:0000314"/>
    <property type="project" value="UniProt"/>
</dbReference>
<dbReference type="GO" id="GO:0010008">
    <property type="term" value="C:endosome membrane"/>
    <property type="evidence" value="ECO:0000314"/>
    <property type="project" value="UniProt"/>
</dbReference>
<dbReference type="GO" id="GO:0005739">
    <property type="term" value="C:mitochondrion"/>
    <property type="evidence" value="ECO:0000250"/>
    <property type="project" value="UniProtKB"/>
</dbReference>
<dbReference type="GO" id="GO:0097342">
    <property type="term" value="C:ripoptosome"/>
    <property type="evidence" value="ECO:0000314"/>
    <property type="project" value="UniProtKB"/>
</dbReference>
<dbReference type="GO" id="GO:0060090">
    <property type="term" value="F:molecular adaptor activity"/>
    <property type="evidence" value="ECO:0000314"/>
    <property type="project" value="UniProt"/>
</dbReference>
<dbReference type="GO" id="GO:0019901">
    <property type="term" value="F:protein kinase binding"/>
    <property type="evidence" value="ECO:0000353"/>
    <property type="project" value="UniProtKB"/>
</dbReference>
<dbReference type="GO" id="GO:0035591">
    <property type="term" value="F:signaling adaptor activity"/>
    <property type="evidence" value="ECO:0000318"/>
    <property type="project" value="GO_Central"/>
</dbReference>
<dbReference type="GO" id="GO:0097190">
    <property type="term" value="P:apoptotic signaling pathway"/>
    <property type="evidence" value="ECO:0007669"/>
    <property type="project" value="Ensembl"/>
</dbReference>
<dbReference type="GO" id="GO:0042100">
    <property type="term" value="P:B cell proliferation"/>
    <property type="evidence" value="ECO:0007669"/>
    <property type="project" value="Ensembl"/>
</dbReference>
<dbReference type="GO" id="GO:0071222">
    <property type="term" value="P:cellular response to lipopolysaccharide"/>
    <property type="evidence" value="ECO:0000250"/>
    <property type="project" value="ParkinsonsUK-UCL"/>
</dbReference>
<dbReference type="GO" id="GO:0140052">
    <property type="term" value="P:cellular response to oxidised low-density lipoprotein particle stimulus"/>
    <property type="evidence" value="ECO:0000250"/>
    <property type="project" value="ARUK-UCL"/>
</dbReference>
<dbReference type="GO" id="GO:0051607">
    <property type="term" value="P:defense response to virus"/>
    <property type="evidence" value="ECO:0007669"/>
    <property type="project" value="UniProtKB-KW"/>
</dbReference>
<dbReference type="GO" id="GO:0006954">
    <property type="term" value="P:inflammatory response"/>
    <property type="evidence" value="ECO:0007669"/>
    <property type="project" value="UniProtKB-KW"/>
</dbReference>
<dbReference type="GO" id="GO:0045087">
    <property type="term" value="P:innate immune response"/>
    <property type="evidence" value="ECO:0007669"/>
    <property type="project" value="UniProtKB-KW"/>
</dbReference>
<dbReference type="GO" id="GO:0031663">
    <property type="term" value="P:lipopolysaccharide-mediated signaling pathway"/>
    <property type="evidence" value="ECO:0007669"/>
    <property type="project" value="Ensembl"/>
</dbReference>
<dbReference type="GO" id="GO:0002281">
    <property type="term" value="P:macrophage activation involved in immune response"/>
    <property type="evidence" value="ECO:0007669"/>
    <property type="project" value="Ensembl"/>
</dbReference>
<dbReference type="GO" id="GO:0006809">
    <property type="term" value="P:nitric oxide biosynthetic process"/>
    <property type="evidence" value="ECO:0007669"/>
    <property type="project" value="Ensembl"/>
</dbReference>
<dbReference type="GO" id="GO:0010508">
    <property type="term" value="P:positive regulation of autophagy"/>
    <property type="evidence" value="ECO:0000250"/>
    <property type="project" value="ParkinsonsUK-UCL"/>
</dbReference>
<dbReference type="GO" id="GO:0030890">
    <property type="term" value="P:positive regulation of B cell proliferation"/>
    <property type="evidence" value="ECO:0007669"/>
    <property type="project" value="Ensembl"/>
</dbReference>
<dbReference type="GO" id="GO:0043123">
    <property type="term" value="P:positive regulation of canonical NF-kappaB signal transduction"/>
    <property type="evidence" value="ECO:0000315"/>
    <property type="project" value="UniProtKB"/>
</dbReference>
<dbReference type="GO" id="GO:0032722">
    <property type="term" value="P:positive regulation of chemokine production"/>
    <property type="evidence" value="ECO:0007669"/>
    <property type="project" value="Ensembl"/>
</dbReference>
<dbReference type="GO" id="GO:1900017">
    <property type="term" value="P:positive regulation of cytokine production involved in inflammatory response"/>
    <property type="evidence" value="ECO:0000250"/>
    <property type="project" value="ARUK-UCL"/>
</dbReference>
<dbReference type="GO" id="GO:0010628">
    <property type="term" value="P:positive regulation of gene expression"/>
    <property type="evidence" value="ECO:0000250"/>
    <property type="project" value="ARUK-UCL"/>
</dbReference>
<dbReference type="GO" id="GO:0032728">
    <property type="term" value="P:positive regulation of interferon-beta production"/>
    <property type="evidence" value="ECO:0007669"/>
    <property type="project" value="Ensembl"/>
</dbReference>
<dbReference type="GO" id="GO:0032755">
    <property type="term" value="P:positive regulation of interleukin-6 production"/>
    <property type="evidence" value="ECO:0007669"/>
    <property type="project" value="Ensembl"/>
</dbReference>
<dbReference type="GO" id="GO:0060907">
    <property type="term" value="P:positive regulation of macrophage cytokine production"/>
    <property type="evidence" value="ECO:0007669"/>
    <property type="project" value="Ensembl"/>
</dbReference>
<dbReference type="GO" id="GO:0002735">
    <property type="term" value="P:positive regulation of myeloid dendritic cell cytokine production"/>
    <property type="evidence" value="ECO:0000250"/>
    <property type="project" value="UniProtKB"/>
</dbReference>
<dbReference type="GO" id="GO:0032816">
    <property type="term" value="P:positive regulation of natural killer cell activation"/>
    <property type="evidence" value="ECO:0007669"/>
    <property type="project" value="Ensembl"/>
</dbReference>
<dbReference type="GO" id="GO:0045429">
    <property type="term" value="P:positive regulation of nitric oxide biosynthetic process"/>
    <property type="evidence" value="ECO:0007669"/>
    <property type="project" value="Ensembl"/>
</dbReference>
<dbReference type="GO" id="GO:0031398">
    <property type="term" value="P:positive regulation of protein ubiquitination"/>
    <property type="evidence" value="ECO:0007669"/>
    <property type="project" value="Ensembl"/>
</dbReference>
<dbReference type="GO" id="GO:0032760">
    <property type="term" value="P:positive regulation of tumor necrosis factor production"/>
    <property type="evidence" value="ECO:0007669"/>
    <property type="project" value="Ensembl"/>
</dbReference>
<dbReference type="GO" id="GO:0032481">
    <property type="term" value="P:positive regulation of type I interferon production"/>
    <property type="evidence" value="ECO:0000314"/>
    <property type="project" value="UniProt"/>
</dbReference>
<dbReference type="GO" id="GO:0043254">
    <property type="term" value="P:regulation of protein-containing complex assembly"/>
    <property type="evidence" value="ECO:0007669"/>
    <property type="project" value="Ensembl"/>
</dbReference>
<dbReference type="GO" id="GO:0043330">
    <property type="term" value="P:response to exogenous dsRNA"/>
    <property type="evidence" value="ECO:0000315"/>
    <property type="project" value="MGI"/>
</dbReference>
<dbReference type="GO" id="GO:0034138">
    <property type="term" value="P:toll-like receptor 3 signaling pathway"/>
    <property type="evidence" value="ECO:0000314"/>
    <property type="project" value="UniProt"/>
</dbReference>
<dbReference type="GO" id="GO:0034142">
    <property type="term" value="P:toll-like receptor 4 signaling pathway"/>
    <property type="evidence" value="ECO:0000314"/>
    <property type="project" value="UniProt"/>
</dbReference>
<dbReference type="GO" id="GO:0002224">
    <property type="term" value="P:toll-like receptor signaling pathway"/>
    <property type="evidence" value="ECO:0000314"/>
    <property type="project" value="UniProt"/>
</dbReference>
<dbReference type="GO" id="GO:0035666">
    <property type="term" value="P:TRIF-dependent toll-like receptor signaling pathway"/>
    <property type="evidence" value="ECO:0000315"/>
    <property type="project" value="CACAO"/>
</dbReference>
<dbReference type="FunFam" id="1.25.40.780:FF:000001">
    <property type="entry name" value="TIR domain-containing adapter molecule 1"/>
    <property type="match status" value="1"/>
</dbReference>
<dbReference type="FunFam" id="3.40.50.10140:FF:000024">
    <property type="entry name" value="TIR domain-containing adapter molecule 1"/>
    <property type="match status" value="1"/>
</dbReference>
<dbReference type="Gene3D" id="1.25.40.780">
    <property type="match status" value="1"/>
</dbReference>
<dbReference type="Gene3D" id="3.40.50.10140">
    <property type="entry name" value="Toll/interleukin-1 receptor homology (TIR) domain"/>
    <property type="match status" value="1"/>
</dbReference>
<dbReference type="InterPro" id="IPR025735">
    <property type="entry name" value="RHIM"/>
</dbReference>
<dbReference type="InterPro" id="IPR046946">
    <property type="entry name" value="TCAM1/2"/>
</dbReference>
<dbReference type="InterPro" id="IPR017278">
    <property type="entry name" value="TICAM1"/>
</dbReference>
<dbReference type="InterPro" id="IPR000157">
    <property type="entry name" value="TIR_dom"/>
</dbReference>
<dbReference type="InterPro" id="IPR035897">
    <property type="entry name" value="Toll_tir_struct_dom_sf"/>
</dbReference>
<dbReference type="InterPro" id="IPR040886">
    <property type="entry name" value="TRIF_N"/>
</dbReference>
<dbReference type="PANTHER" id="PTHR47230">
    <property type="entry name" value="TIR DOMAIN-CONTAINING ADAPTER MOLECULE 1"/>
    <property type="match status" value="1"/>
</dbReference>
<dbReference type="PANTHER" id="PTHR47230:SF1">
    <property type="entry name" value="TIR DOMAIN-CONTAINING ADAPTER MOLECULE 1"/>
    <property type="match status" value="1"/>
</dbReference>
<dbReference type="Pfam" id="PF12721">
    <property type="entry name" value="RHIM"/>
    <property type="match status" value="1"/>
</dbReference>
<dbReference type="Pfam" id="PF17798">
    <property type="entry name" value="TRIF-NTD"/>
    <property type="match status" value="1"/>
</dbReference>
<dbReference type="PIRSF" id="PIRSF037744">
    <property type="entry name" value="TIR_Ticam"/>
    <property type="match status" value="1"/>
</dbReference>
<dbReference type="SUPFAM" id="SSF52200">
    <property type="entry name" value="Toll/Interleukin receptor TIR domain"/>
    <property type="match status" value="1"/>
</dbReference>
<dbReference type="PROSITE" id="PS50104">
    <property type="entry name" value="TIR"/>
    <property type="match status" value="1"/>
</dbReference>